<accession>P9WHJ4</accession>
<accession>L7N5Z6</accession>
<dbReference type="EMBL" id="AE000516">
    <property type="protein sequence ID" value="AAK46389.1"/>
    <property type="molecule type" value="Genomic_DNA"/>
</dbReference>
<dbReference type="PIR" id="A70945">
    <property type="entry name" value="A70945"/>
</dbReference>
<dbReference type="RefSeq" id="WP_003410601.1">
    <property type="nucleotide sequence ID" value="NZ_KK341227.1"/>
</dbReference>
<dbReference type="BMRB" id="P9WHJ4"/>
<dbReference type="EMDB" id="EMD-21406"/>
<dbReference type="EMDB" id="EMD-21407"/>
<dbReference type="EMDB" id="EMD-21408"/>
<dbReference type="EMDB" id="EMD-21409"/>
<dbReference type="EMDB" id="EMD-22886"/>
<dbReference type="EMDB" id="EMD-22887"/>
<dbReference type="EMDB" id="EMD-22888"/>
<dbReference type="EMDB" id="EMD-9037"/>
<dbReference type="EMDB" id="EMD-9039"/>
<dbReference type="EMDB" id="EMD-9041"/>
<dbReference type="EMDB" id="EMD-9047"/>
<dbReference type="SMR" id="P9WHJ4"/>
<dbReference type="GeneID" id="45426029"/>
<dbReference type="KEGG" id="mtc:MT2110"/>
<dbReference type="PATRIC" id="fig|83331.31.peg.2276"/>
<dbReference type="HOGENOM" id="CLU_134276_0_0_11"/>
<dbReference type="Proteomes" id="UP000001020">
    <property type="component" value="Chromosome"/>
</dbReference>
<dbReference type="GO" id="GO:0001000">
    <property type="term" value="F:bacterial-type RNA polymerase core enzyme binding"/>
    <property type="evidence" value="ECO:0007669"/>
    <property type="project" value="UniProtKB-UniRule"/>
</dbReference>
<dbReference type="GO" id="GO:0045893">
    <property type="term" value="P:positive regulation of DNA-templated transcription"/>
    <property type="evidence" value="ECO:0007669"/>
    <property type="project" value="UniProtKB-UniRule"/>
</dbReference>
<dbReference type="FunFam" id="2.20.28.270:FF:000001">
    <property type="entry name" value="RNA polymerase-binding protein RbpA"/>
    <property type="match status" value="1"/>
</dbReference>
<dbReference type="Gene3D" id="2.20.28.270">
    <property type="entry name" value="RNA polymerase-binding protein A"/>
    <property type="match status" value="1"/>
</dbReference>
<dbReference type="HAMAP" id="MF_01483">
    <property type="entry name" value="RbpA"/>
    <property type="match status" value="1"/>
</dbReference>
<dbReference type="InterPro" id="IPR038638">
    <property type="entry name" value="RbpA_sf"/>
</dbReference>
<dbReference type="InterPro" id="IPR025182">
    <property type="entry name" value="RNApol-bd_RbpA"/>
</dbReference>
<dbReference type="Pfam" id="PF13397">
    <property type="entry name" value="RbpA"/>
    <property type="match status" value="1"/>
</dbReference>
<keyword id="KW-1185">Reference proteome</keyword>
<keyword id="KW-0804">Transcription</keyword>
<keyword id="KW-0805">Transcription regulation</keyword>
<reference key="1">
    <citation type="journal article" date="2002" name="J. Bacteriol.">
        <title>Whole-genome comparison of Mycobacterium tuberculosis clinical and laboratory strains.</title>
        <authorList>
            <person name="Fleischmann R.D."/>
            <person name="Alland D."/>
            <person name="Eisen J.A."/>
            <person name="Carpenter L."/>
            <person name="White O."/>
            <person name="Peterson J.D."/>
            <person name="DeBoy R.T."/>
            <person name="Dodson R.J."/>
            <person name="Gwinn M.L."/>
            <person name="Haft D.H."/>
            <person name="Hickey E.K."/>
            <person name="Kolonay J.F."/>
            <person name="Nelson W.C."/>
            <person name="Umayam L.A."/>
            <person name="Ermolaeva M.D."/>
            <person name="Salzberg S.L."/>
            <person name="Delcher A."/>
            <person name="Utterback T.R."/>
            <person name="Weidman J.F."/>
            <person name="Khouri H.M."/>
            <person name="Gill J."/>
            <person name="Mikula A."/>
            <person name="Bishai W."/>
            <person name="Jacobs W.R. Jr."/>
            <person name="Venter J.C."/>
            <person name="Fraser C.M."/>
        </authorList>
    </citation>
    <scope>NUCLEOTIDE SEQUENCE [LARGE SCALE GENOMIC DNA]</scope>
    <source>
        <strain>CDC 1551 / Oshkosh</strain>
    </source>
</reference>
<protein>
    <recommendedName>
        <fullName evidence="1">RNA polymerase-binding protein RbpA</fullName>
    </recommendedName>
</protein>
<feature type="chain" id="PRO_0000428174" description="RNA polymerase-binding protein RbpA">
    <location>
        <begin position="1"/>
        <end position="111"/>
    </location>
</feature>
<gene>
    <name evidence="1" type="primary">rbpA</name>
    <name type="ordered locus">MT2110</name>
</gene>
<sequence length="111" mass="12972">MADRVLRGSRLGAVSYETDRNHDLAPRQIARYRTDNGEEFEVPFADDAEIPGTWLCRNGMEGTLIEGDLPEPKKVKPPRTHWDMLLERRSIEELEELLKERLELIRSRRRG</sequence>
<comment type="function">
    <text evidence="1">Binds to RNA polymerase (RNAP), stimulating transcription from principal, but not alternative sigma factor promoters.</text>
</comment>
<comment type="subunit">
    <text evidence="1">Forms a complex with the RNAP catalytic core and with free principal sigma factors.</text>
</comment>
<comment type="similarity">
    <text evidence="1">Belongs to the RNA polymerase-binding protein RbpA family.</text>
</comment>
<name>RBPA_MYCTO</name>
<evidence type="ECO:0000255" key="1">
    <source>
        <dbReference type="HAMAP-Rule" id="MF_01483"/>
    </source>
</evidence>
<proteinExistence type="inferred from homology"/>
<organism>
    <name type="scientific">Mycobacterium tuberculosis (strain CDC 1551 / Oshkosh)</name>
    <dbReference type="NCBI Taxonomy" id="83331"/>
    <lineage>
        <taxon>Bacteria</taxon>
        <taxon>Bacillati</taxon>
        <taxon>Actinomycetota</taxon>
        <taxon>Actinomycetes</taxon>
        <taxon>Mycobacteriales</taxon>
        <taxon>Mycobacteriaceae</taxon>
        <taxon>Mycobacterium</taxon>
        <taxon>Mycobacterium tuberculosis complex</taxon>
    </lineage>
</organism>